<keyword id="KW-0028">Amino-acid biosynthesis</keyword>
<keyword id="KW-0413">Isomerase</keyword>
<keyword id="KW-0456">Lyase</keyword>
<keyword id="KW-0479">Metal-binding</keyword>
<keyword id="KW-0486">Methionine biosynthesis</keyword>
<keyword id="KW-0511">Multifunctional enzyme</keyword>
<keyword id="KW-1185">Reference proteome</keyword>
<keyword id="KW-0862">Zinc</keyword>
<feature type="chain" id="PRO_0000357211" description="Probable bifunctional methylthioribose-1-phosphate isomerase/methylthioribulose-1-phosphate dehydratase">
    <location>
        <begin position="1"/>
        <end position="552"/>
    </location>
</feature>
<feature type="region of interest" description="Methylthioribose-1-phosphate isomerase activity">
    <location>
        <begin position="1"/>
        <end position="333"/>
    </location>
</feature>
<feature type="region of interest" description="Methylthioribulose-1-phosphate dehydratase activity">
    <location>
        <begin position="334"/>
        <end position="535"/>
    </location>
</feature>
<feature type="active site" description="Proton donor" evidence="1">
    <location>
        <position position="236"/>
    </location>
</feature>
<feature type="binding site" evidence="1">
    <location>
        <begin position="49"/>
        <end position="51"/>
    </location>
    <ligand>
        <name>substrate</name>
    </ligand>
</feature>
<feature type="binding site" evidence="1">
    <location>
        <position position="91"/>
    </location>
    <ligand>
        <name>substrate</name>
    </ligand>
</feature>
<feature type="binding site" evidence="1">
    <location>
        <position position="195"/>
    </location>
    <ligand>
        <name>substrate</name>
    </ligand>
</feature>
<feature type="binding site" evidence="1">
    <location>
        <begin position="246"/>
        <end position="247"/>
    </location>
    <ligand>
        <name>substrate</name>
    </ligand>
</feature>
<feature type="binding site" evidence="1">
    <location>
        <position position="427"/>
    </location>
    <ligand>
        <name>Zn(2+)</name>
        <dbReference type="ChEBI" id="CHEBI:29105"/>
    </ligand>
</feature>
<feature type="binding site" evidence="1">
    <location>
        <position position="429"/>
    </location>
    <ligand>
        <name>Zn(2+)</name>
        <dbReference type="ChEBI" id="CHEBI:29105"/>
    </ligand>
</feature>
<feature type="site" description="Transition state stabilizer" evidence="1">
    <location>
        <position position="156"/>
    </location>
</feature>
<reference key="1">
    <citation type="journal article" date="2004" name="Proc. Natl. Acad. Sci. U.S.A.">
        <title>The complete genomic sequence of Nocardia farcinica IFM 10152.</title>
        <authorList>
            <person name="Ishikawa J."/>
            <person name="Yamashita A."/>
            <person name="Mikami Y."/>
            <person name="Hoshino Y."/>
            <person name="Kurita H."/>
            <person name="Hotta K."/>
            <person name="Shiba T."/>
            <person name="Hattori M."/>
        </authorList>
    </citation>
    <scope>NUCLEOTIDE SEQUENCE [LARGE SCALE GENOMIC DNA]</scope>
    <source>
        <strain>IFM 10152</strain>
    </source>
</reference>
<gene>
    <name type="primary">mtnAB</name>
    <name type="ordered locus">NFA_45440</name>
</gene>
<accession>Q5YQZ6</accession>
<comment type="function">
    <text evidence="1">Bifunctional protein that catalyzes the interconversion of methylthioribose-1-phosphate (MTR-1-P) into methylthioribulose-1-phosphate (MTRu-1-P), and the dehydration of methylthioribulose-1-phosphate (MTRu-1-P) into 2,3-diketo-5-methylthiopentyl-1-phosphate (DK-MTP-1-P).</text>
</comment>
<comment type="catalytic activity">
    <reaction>
        <text>5-(methylsulfanyl)-alpha-D-ribose 1-phosphate = 5-(methylsulfanyl)-D-ribulose 1-phosphate</text>
        <dbReference type="Rhea" id="RHEA:19989"/>
        <dbReference type="ChEBI" id="CHEBI:58533"/>
        <dbReference type="ChEBI" id="CHEBI:58548"/>
        <dbReference type="EC" id="5.3.1.23"/>
    </reaction>
</comment>
<comment type="catalytic activity">
    <reaction>
        <text>5-(methylsulfanyl)-D-ribulose 1-phosphate = 5-methylsulfanyl-2,3-dioxopentyl phosphate + H2O</text>
        <dbReference type="Rhea" id="RHEA:15549"/>
        <dbReference type="ChEBI" id="CHEBI:15377"/>
        <dbReference type="ChEBI" id="CHEBI:58548"/>
        <dbReference type="ChEBI" id="CHEBI:58828"/>
        <dbReference type="EC" id="4.2.1.109"/>
    </reaction>
</comment>
<comment type="cofactor">
    <cofactor evidence="1">
        <name>Zn(2+)</name>
        <dbReference type="ChEBI" id="CHEBI:29105"/>
    </cofactor>
    <text evidence="1">Binds 1 zinc ion per subunit.</text>
</comment>
<comment type="pathway">
    <text>Amino-acid biosynthesis; L-methionine biosynthesis via salvage pathway; L-methionine from S-methyl-5-thio-alpha-D-ribose 1-phosphate: step 1/6.</text>
</comment>
<comment type="pathway">
    <text>Amino-acid biosynthesis; L-methionine biosynthesis via salvage pathway; L-methionine from S-methyl-5-thio-alpha-D-ribose 1-phosphate: step 2/6.</text>
</comment>
<comment type="similarity">
    <text evidence="2">In the N-terminal section; belongs to the eIF-2B alpha/beta/delta subunits family. MtnA subfamily.</text>
</comment>
<comment type="similarity">
    <text evidence="2">In the C-terminal section; belongs to the aldolase class II family. MtnB subfamily.</text>
</comment>
<proteinExistence type="inferred from homology"/>
<name>MTNAB_NOCFA</name>
<protein>
    <recommendedName>
        <fullName>Probable bifunctional methylthioribose-1-phosphate isomerase/methylthioribulose-1-phosphate dehydratase</fullName>
    </recommendedName>
    <domain>
        <recommendedName>
            <fullName>Methylthioribose-1-phosphate isomerase</fullName>
            <shortName>M1Pi</shortName>
            <shortName>MTR-1-P isomerase</shortName>
            <ecNumber>5.3.1.23</ecNumber>
        </recommendedName>
        <alternativeName>
            <fullName>S-methyl-5-thioribose-1-phosphate isomerase</fullName>
        </alternativeName>
    </domain>
    <domain>
        <recommendedName>
            <fullName>Methylthioribulose-1-phosphate dehydratase</fullName>
            <shortName>MTRu-1-P dehydratase</shortName>
            <ecNumber>4.2.1.109</ecNumber>
        </recommendedName>
    </domain>
</protein>
<evidence type="ECO:0000250" key="1"/>
<evidence type="ECO:0000305" key="2"/>
<sequence>MRPIDDSSLTWDDGALVTVDQRGLPHEARPLRLRTADQIIDAIKTLAIRGAPAIGIAGAFAVVLATRAHTRDGIVDVAAVRAEADRIAAARPTAVNLAWAVDRVRPRIAEGADAVLAETLDMLAEDGRVNRAAATHAADLVQRLCGPRPLRVLTHCNTGRLATSAFGTAIGALRVLAERGAVEEVLVDETRPLLQGARLTTWELAEAGIPHRLTIDSAAAWAMATGLVDCVLVGADRVTARGDVANKIGTYAVALAAHRHGIPFVVVAPESTRDPATASWRDIVVEERAAEEVTAFAGSATAPVGTAAFNPAFDVTPADLVTAVVTEHGVVHGTVAAEPGARIAATARELYARGWMPGTAGNLSVRTGDTAVVTASGLAKGELSATDMVRVAIADSTPLPGQDRRPSAETTIHTAVYRATGAAAVVHVHSPFATALATRAGAADEVRVLRITDYELIKGLGGSDPTAIDLAIFPNWRDVPRIAADIERRLAEHPGAPPVLCIAGHGITTWGENLTQARDRAECLEAVCELVLRTGREHAFAPQTHVLEMGPT</sequence>
<organism>
    <name type="scientific">Nocardia farcinica (strain IFM 10152)</name>
    <dbReference type="NCBI Taxonomy" id="247156"/>
    <lineage>
        <taxon>Bacteria</taxon>
        <taxon>Bacillati</taxon>
        <taxon>Actinomycetota</taxon>
        <taxon>Actinomycetes</taxon>
        <taxon>Mycobacteriales</taxon>
        <taxon>Nocardiaceae</taxon>
        <taxon>Nocardia</taxon>
    </lineage>
</organism>
<dbReference type="EC" id="5.3.1.23"/>
<dbReference type="EC" id="4.2.1.109"/>
<dbReference type="EMBL" id="AP006618">
    <property type="protein sequence ID" value="BAD59395.1"/>
    <property type="molecule type" value="Genomic_DNA"/>
</dbReference>
<dbReference type="RefSeq" id="WP_011211079.1">
    <property type="nucleotide sequence ID" value="NC_006361.1"/>
</dbReference>
<dbReference type="SMR" id="Q5YQZ6"/>
<dbReference type="STRING" id="247156.NFA_45440"/>
<dbReference type="GeneID" id="61135151"/>
<dbReference type="KEGG" id="nfa:NFA_45440"/>
<dbReference type="eggNOG" id="COG0182">
    <property type="taxonomic scope" value="Bacteria"/>
</dbReference>
<dbReference type="eggNOG" id="COG0235">
    <property type="taxonomic scope" value="Bacteria"/>
</dbReference>
<dbReference type="HOGENOM" id="CLU_036388_0_0_11"/>
<dbReference type="OrthoDB" id="9803436at2"/>
<dbReference type="UniPathway" id="UPA00904">
    <property type="reaction ID" value="UER00874"/>
</dbReference>
<dbReference type="UniPathway" id="UPA00904">
    <property type="reaction ID" value="UER00875"/>
</dbReference>
<dbReference type="Proteomes" id="UP000006820">
    <property type="component" value="Chromosome"/>
</dbReference>
<dbReference type="GO" id="GO:0005737">
    <property type="term" value="C:cytoplasm"/>
    <property type="evidence" value="ECO:0007669"/>
    <property type="project" value="InterPro"/>
</dbReference>
<dbReference type="GO" id="GO:0046570">
    <property type="term" value="F:methylthioribulose 1-phosphate dehydratase activity"/>
    <property type="evidence" value="ECO:0007669"/>
    <property type="project" value="UniProtKB-UniRule"/>
</dbReference>
<dbReference type="GO" id="GO:0046523">
    <property type="term" value="F:S-methyl-5-thioribose-1-phosphate isomerase activity"/>
    <property type="evidence" value="ECO:0007669"/>
    <property type="project" value="UniProtKB-UniRule"/>
</dbReference>
<dbReference type="GO" id="GO:0008270">
    <property type="term" value="F:zinc ion binding"/>
    <property type="evidence" value="ECO:0007669"/>
    <property type="project" value="UniProtKB-UniRule"/>
</dbReference>
<dbReference type="GO" id="GO:0019509">
    <property type="term" value="P:L-methionine salvage from methylthioadenosine"/>
    <property type="evidence" value="ECO:0007669"/>
    <property type="project" value="UniProtKB-UniRule"/>
</dbReference>
<dbReference type="FunFam" id="1.20.120.420:FF:000003">
    <property type="entry name" value="Methylthioribose-1-phosphate isomerase"/>
    <property type="match status" value="1"/>
</dbReference>
<dbReference type="FunFam" id="3.40.50.10470:FF:000006">
    <property type="entry name" value="Methylthioribose-1-phosphate isomerase"/>
    <property type="match status" value="1"/>
</dbReference>
<dbReference type="Gene3D" id="3.40.225.10">
    <property type="entry name" value="Class II aldolase/adducin N-terminal domain"/>
    <property type="match status" value="1"/>
</dbReference>
<dbReference type="Gene3D" id="1.20.120.420">
    <property type="entry name" value="translation initiation factor eif-2b, domain 1"/>
    <property type="match status" value="1"/>
</dbReference>
<dbReference type="Gene3D" id="3.40.50.10470">
    <property type="entry name" value="Translation initiation factor eif-2b, domain 2"/>
    <property type="match status" value="1"/>
</dbReference>
<dbReference type="HAMAP" id="MF_01678">
    <property type="entry name" value="Salvage_MtnA"/>
    <property type="match status" value="1"/>
</dbReference>
<dbReference type="HAMAP" id="MF_01677">
    <property type="entry name" value="Salvage_MtnB"/>
    <property type="match status" value="1"/>
</dbReference>
<dbReference type="InterPro" id="IPR001303">
    <property type="entry name" value="Aldolase_II/adducin_N"/>
</dbReference>
<dbReference type="InterPro" id="IPR036409">
    <property type="entry name" value="Aldolase_II/adducin_N_sf"/>
</dbReference>
<dbReference type="InterPro" id="IPR000649">
    <property type="entry name" value="IF-2B-related"/>
</dbReference>
<dbReference type="InterPro" id="IPR005251">
    <property type="entry name" value="IF-M1Pi"/>
</dbReference>
<dbReference type="InterPro" id="IPR042529">
    <property type="entry name" value="IF_2B-like_C"/>
</dbReference>
<dbReference type="InterPro" id="IPR011559">
    <property type="entry name" value="Initiation_fac_2B_a/b/d"/>
</dbReference>
<dbReference type="InterPro" id="IPR027363">
    <property type="entry name" value="M1Pi_N"/>
</dbReference>
<dbReference type="InterPro" id="IPR017714">
    <property type="entry name" value="MethylthioRu-1-P_deHdtase_MtnB"/>
</dbReference>
<dbReference type="InterPro" id="IPR037171">
    <property type="entry name" value="NagB/RpiA_transferase-like"/>
</dbReference>
<dbReference type="NCBIfam" id="TIGR00524">
    <property type="entry name" value="eIF-2B_rel"/>
    <property type="match status" value="1"/>
</dbReference>
<dbReference type="NCBIfam" id="NF004326">
    <property type="entry name" value="PRK05720.1"/>
    <property type="match status" value="1"/>
</dbReference>
<dbReference type="NCBIfam" id="TIGR00512">
    <property type="entry name" value="salvage_mtnA"/>
    <property type="match status" value="1"/>
</dbReference>
<dbReference type="NCBIfam" id="TIGR03328">
    <property type="entry name" value="salvage_mtnB"/>
    <property type="match status" value="1"/>
</dbReference>
<dbReference type="PANTHER" id="PTHR43475">
    <property type="entry name" value="METHYLTHIORIBOSE-1-PHOSPHATE ISOMERASE"/>
    <property type="match status" value="1"/>
</dbReference>
<dbReference type="PANTHER" id="PTHR43475:SF1">
    <property type="entry name" value="METHYLTHIORIBOSE-1-PHOSPHATE ISOMERASE"/>
    <property type="match status" value="1"/>
</dbReference>
<dbReference type="Pfam" id="PF00596">
    <property type="entry name" value="Aldolase_II"/>
    <property type="match status" value="1"/>
</dbReference>
<dbReference type="Pfam" id="PF01008">
    <property type="entry name" value="IF-2B"/>
    <property type="match status" value="1"/>
</dbReference>
<dbReference type="SMART" id="SM01007">
    <property type="entry name" value="Aldolase_II"/>
    <property type="match status" value="1"/>
</dbReference>
<dbReference type="SUPFAM" id="SSF53639">
    <property type="entry name" value="AraD/HMP-PK domain-like"/>
    <property type="match status" value="1"/>
</dbReference>
<dbReference type="SUPFAM" id="SSF100950">
    <property type="entry name" value="NagB/RpiA/CoA transferase-like"/>
    <property type="match status" value="1"/>
</dbReference>